<dbReference type="EMBL" id="CH981528">
    <property type="protein sequence ID" value="EDK45635.1"/>
    <property type="status" value="ALT_FRAME"/>
    <property type="molecule type" value="Genomic_DNA"/>
</dbReference>
<dbReference type="RefSeq" id="XP_001524782.1">
    <property type="nucleotide sequence ID" value="XM_001524732.1"/>
</dbReference>
<dbReference type="SMR" id="A5E2H7"/>
<dbReference type="FunCoup" id="A5E2H7">
    <property type="interactions" value="54"/>
</dbReference>
<dbReference type="STRING" id="379508.A5E2H7"/>
<dbReference type="GeneID" id="5232181"/>
<dbReference type="KEGG" id="lel:PVL30_004636"/>
<dbReference type="eggNOG" id="KOG1974">
    <property type="taxonomic scope" value="Eukaryota"/>
</dbReference>
<dbReference type="HOGENOM" id="CLU_008440_0_0_1"/>
<dbReference type="InParanoid" id="A5E2H7"/>
<dbReference type="OrthoDB" id="310853at2759"/>
<dbReference type="Proteomes" id="UP000001996">
    <property type="component" value="Unassembled WGS sequence"/>
</dbReference>
<dbReference type="GO" id="GO:0031298">
    <property type="term" value="C:replication fork protection complex"/>
    <property type="evidence" value="ECO:0007669"/>
    <property type="project" value="TreeGrafter"/>
</dbReference>
<dbReference type="GO" id="GO:0003677">
    <property type="term" value="F:DNA binding"/>
    <property type="evidence" value="ECO:0007669"/>
    <property type="project" value="TreeGrafter"/>
</dbReference>
<dbReference type="GO" id="GO:0006281">
    <property type="term" value="P:DNA repair"/>
    <property type="evidence" value="ECO:0007669"/>
    <property type="project" value="UniProtKB-KW"/>
</dbReference>
<dbReference type="GO" id="GO:0000076">
    <property type="term" value="P:DNA replication checkpoint signaling"/>
    <property type="evidence" value="ECO:0007669"/>
    <property type="project" value="TreeGrafter"/>
</dbReference>
<dbReference type="GO" id="GO:0051321">
    <property type="term" value="P:meiotic cell cycle"/>
    <property type="evidence" value="ECO:0007669"/>
    <property type="project" value="UniProtKB-KW"/>
</dbReference>
<dbReference type="GO" id="GO:0043111">
    <property type="term" value="P:replication fork arrest"/>
    <property type="evidence" value="ECO:0007669"/>
    <property type="project" value="TreeGrafter"/>
</dbReference>
<dbReference type="InterPro" id="IPR044998">
    <property type="entry name" value="Timeless"/>
</dbReference>
<dbReference type="InterPro" id="IPR006906">
    <property type="entry name" value="Timeless_N"/>
</dbReference>
<dbReference type="PANTHER" id="PTHR22940:SF4">
    <property type="entry name" value="PROTEIN TIMELESS HOMOLOG"/>
    <property type="match status" value="1"/>
</dbReference>
<dbReference type="PANTHER" id="PTHR22940">
    <property type="entry name" value="TIMEOUT/TIMELESS-2"/>
    <property type="match status" value="1"/>
</dbReference>
<dbReference type="Pfam" id="PF04821">
    <property type="entry name" value="TIMELESS"/>
    <property type="match status" value="1"/>
</dbReference>
<feature type="chain" id="PRO_0000301741" description="Topoisomerase 1-associated factor 1">
    <location>
        <begin position="1"/>
        <end position="1175"/>
    </location>
</feature>
<feature type="region of interest" description="Disordered" evidence="2">
    <location>
        <begin position="894"/>
        <end position="982"/>
    </location>
</feature>
<feature type="region of interest" description="Disordered" evidence="2">
    <location>
        <begin position="1043"/>
        <end position="1175"/>
    </location>
</feature>
<feature type="compositionally biased region" description="Basic residues" evidence="2">
    <location>
        <begin position="910"/>
        <end position="921"/>
    </location>
</feature>
<feature type="compositionally biased region" description="Acidic residues" evidence="2">
    <location>
        <begin position="930"/>
        <end position="940"/>
    </location>
</feature>
<feature type="compositionally biased region" description="Basic and acidic residues" evidence="2">
    <location>
        <begin position="954"/>
        <end position="966"/>
    </location>
</feature>
<feature type="compositionally biased region" description="Acidic residues" evidence="2">
    <location>
        <begin position="1044"/>
        <end position="1053"/>
    </location>
</feature>
<feature type="compositionally biased region" description="Polar residues" evidence="2">
    <location>
        <begin position="1078"/>
        <end position="1096"/>
    </location>
</feature>
<feature type="compositionally biased region" description="Acidic residues" evidence="2">
    <location>
        <begin position="1137"/>
        <end position="1156"/>
    </location>
</feature>
<organism>
    <name type="scientific">Lodderomyces elongisporus (strain ATCC 11503 / CBS 2605 / JCM 1781 / NBRC 1676 / NRRL YB-4239)</name>
    <name type="common">Yeast</name>
    <name type="synonym">Saccharomyces elongisporus</name>
    <dbReference type="NCBI Taxonomy" id="379508"/>
    <lineage>
        <taxon>Eukaryota</taxon>
        <taxon>Fungi</taxon>
        <taxon>Dikarya</taxon>
        <taxon>Ascomycota</taxon>
        <taxon>Saccharomycotina</taxon>
        <taxon>Pichiomycetes</taxon>
        <taxon>Debaryomycetaceae</taxon>
        <taxon>Candida/Lodderomyces clade</taxon>
        <taxon>Lodderomyces</taxon>
    </lineage>
</organism>
<name>TOF1_LODEL</name>
<gene>
    <name type="primary">TOF1</name>
    <name type="ORF">LELG_03814</name>
</gene>
<comment type="function">
    <text evidence="1">Forms a fork protection complex (FPC) with CSM3 and which is required for chromosome segregation during meiosis and DNA damage repair. FPC coordinates leading and lagging strand synthesis and moves with the replication fork. FPC stabilizes replication forks in a configuration that is recognized by replication checkpoint sensors (By similarity).</text>
</comment>
<comment type="subunit">
    <text evidence="1">Component of the fork protection complex (FPC) consisting of TOF1 and CSM3.</text>
</comment>
<comment type="subcellular location">
    <subcellularLocation>
        <location evidence="1">Nucleus</location>
    </subcellularLocation>
</comment>
<comment type="similarity">
    <text evidence="3">Belongs to the timeless family.</text>
</comment>
<comment type="sequence caution" evidence="3">
    <conflict type="frameshift">
        <sequence resource="EMBL-CDS" id="EDK45635"/>
    </conflict>
</comment>
<proteinExistence type="inferred from homology"/>
<sequence length="1175" mass="134406">MEEDKIRALTTTLKPNETQAQKLLKAHIAVLVSALGGIDKTSEIVPPPYKLGHDALACLKDIKRWIRAVDERQHNYEVALACAESGLVQNDLIIILCQWDSQMQNKKQKTDTMVRNKTAMEKIMLSCLEILVLLTWPMEFGTNLSENQKLLFAQVRKIQVLHKKHILTYNDGQVLKAVIRLALPVIAKTRIDREPRDNQILRLVLYFTRNLLAIEPENDSISTKTNNKRATPSSNLPNGVSPDDISINNLLRVFKKNKVLMLLLTITGSINSEFEKDLFNEICLESVYLLIKGLEAKDVLVNKPTSTTKMNTKTAAAAATTATTATTTTTNTTSSVDISATTPLQPLSSTVGLQLQDLLNTEAKKRQSQKQHIATRHGKFGTLLSIRSADANSYVVSGEEALINSNGTMDKLDKSKTWKMKNHFTYDSDEFVKTNSPIYLNAQGRQILSYFIEEFLSGGCFNNLIESMTSKLTSQLEYSLIDELTQASYFYTIAWFLNYQREQITLSGLQTFDFGVVRAALSEVNFILIVAYFRDSHQKRLWNSLHVAMICFKELLHISNSIFGKKRARTTNDDTIGDDEQYEIDRELAEGIIRKLFSFNEFLNTLVQVPQIAYKHSPRFLAESIRVITIILKSFESFAKEDLQLYVQTKRRRNKKKQQRINELDRDTESKLSTAIYESDEELAQENLREVTRERKLNFQATEVRFFHQNVVTTYIEYMSRFEDLTHEDIKMCLTYFHKLFVVRKDYNGLFRLDFMQLIYKLRNHLPKGSPIRLKVDEFIYYFMKKFKLAITRFPNPLEILFPRFEETRFKHYLSTGELYQLDTAVDPRAIRNLNKEVIDNDYNDAVDNDNNNDNYNEDDEDGIAFEIEANPEAADNHAYDLDRLDELESQLTNYQSRNKNRSSLEKGIAKKRNSRKKSTKTSKVNSDGGDSDDDDDDADAAAAAKAHRKRRVPRDLLFEEPKPLRSAEFINDSDDESDDEKNAEFFAREERLRQLLNQTGNITDAQKLEEFKKVWQQYSKTGGSIMQDAVANAVKEVSLFISDGDDDDDDGNGNENQKGKRKRTRDEADDFDGVSTILDSVQSQVLDNGSSQGNFASDAEVYHASSNTSDTELETNKRAKIDDAEEKEDEGKGEKEEDDNADEDEDEDEDVDGEESFPVVHHKKKRAIISDDEE</sequence>
<keyword id="KW-0131">Cell cycle</keyword>
<keyword id="KW-0227">DNA damage</keyword>
<keyword id="KW-0234">DNA repair</keyword>
<keyword id="KW-0236">DNA replication inhibitor</keyword>
<keyword id="KW-0469">Meiosis</keyword>
<keyword id="KW-0539">Nucleus</keyword>
<keyword id="KW-1185">Reference proteome</keyword>
<protein>
    <recommendedName>
        <fullName>Topoisomerase 1-associated factor 1</fullName>
    </recommendedName>
</protein>
<reference key="1">
    <citation type="journal article" date="2009" name="Nature">
        <title>Evolution of pathogenicity and sexual reproduction in eight Candida genomes.</title>
        <authorList>
            <person name="Butler G."/>
            <person name="Rasmussen M.D."/>
            <person name="Lin M.F."/>
            <person name="Santos M.A.S."/>
            <person name="Sakthikumar S."/>
            <person name="Munro C.A."/>
            <person name="Rheinbay E."/>
            <person name="Grabherr M."/>
            <person name="Forche A."/>
            <person name="Reedy J.L."/>
            <person name="Agrafioti I."/>
            <person name="Arnaud M.B."/>
            <person name="Bates S."/>
            <person name="Brown A.J.P."/>
            <person name="Brunke S."/>
            <person name="Costanzo M.C."/>
            <person name="Fitzpatrick D.A."/>
            <person name="de Groot P.W.J."/>
            <person name="Harris D."/>
            <person name="Hoyer L.L."/>
            <person name="Hube B."/>
            <person name="Klis F.M."/>
            <person name="Kodira C."/>
            <person name="Lennard N."/>
            <person name="Logue M.E."/>
            <person name="Martin R."/>
            <person name="Neiman A.M."/>
            <person name="Nikolaou E."/>
            <person name="Quail M.A."/>
            <person name="Quinn J."/>
            <person name="Santos M.C."/>
            <person name="Schmitzberger F.F."/>
            <person name="Sherlock G."/>
            <person name="Shah P."/>
            <person name="Silverstein K.A.T."/>
            <person name="Skrzypek M.S."/>
            <person name="Soll D."/>
            <person name="Staggs R."/>
            <person name="Stansfield I."/>
            <person name="Stumpf M.P.H."/>
            <person name="Sudbery P.E."/>
            <person name="Srikantha T."/>
            <person name="Zeng Q."/>
            <person name="Berman J."/>
            <person name="Berriman M."/>
            <person name="Heitman J."/>
            <person name="Gow N.A.R."/>
            <person name="Lorenz M.C."/>
            <person name="Birren B.W."/>
            <person name="Kellis M."/>
            <person name="Cuomo C.A."/>
        </authorList>
    </citation>
    <scope>NUCLEOTIDE SEQUENCE [LARGE SCALE GENOMIC DNA]</scope>
    <source>
        <strain>ATCC 11503 / BCRC 21390 / CBS 2605 / JCM 1781 / NBRC 1676 / NRRL YB-4239</strain>
    </source>
</reference>
<evidence type="ECO:0000250" key="1"/>
<evidence type="ECO:0000256" key="2">
    <source>
        <dbReference type="SAM" id="MobiDB-lite"/>
    </source>
</evidence>
<evidence type="ECO:0000305" key="3"/>
<accession>A5E2H7</accession>